<comment type="similarity">
    <text evidence="1">Belongs to the UPF0246 family.</text>
</comment>
<comment type="sequence caution" evidence="2">
    <conflict type="erroneous initiation">
        <sequence resource="EMBL-CDS" id="ABI83432"/>
    </conflict>
</comment>
<proteinExistence type="inferred from homology"/>
<protein>
    <recommendedName>
        <fullName evidence="1">UPF0246 protein FTH_1656</fullName>
    </recommendedName>
</protein>
<evidence type="ECO:0000255" key="1">
    <source>
        <dbReference type="HAMAP-Rule" id="MF_00652"/>
    </source>
</evidence>
<evidence type="ECO:0000305" key="2"/>
<sequence length="254" mass="29360">MIIVISPAKSQNFEPIKTAYQFTQPIFKQQIIKLINTLKHYEVEEIEKLMKISPKLAEEVFAKHNSFNPNKYDNSNAKAAIFTFSGDVYKGLEADTLDNKTIEYAQNHLLMLSGLYGLVRPLDLIQAYRLEMGTNIKIDGKILHKYWQDKITTQLNEYFSQQQNKILINLASNEYSQAIDKKSLAVKWLDIDFKENKAGAYKTIGIHAKKARGLMTRYILENRIENVSDIKKFNVAGYQFNPDFSDENLLCFTR</sequence>
<feature type="chain" id="PRO_0000262018" description="UPF0246 protein FTH_1656">
    <location>
        <begin position="1"/>
        <end position="254"/>
    </location>
</feature>
<gene>
    <name type="ordered locus">FTH_1656</name>
</gene>
<reference key="1">
    <citation type="journal article" date="2006" name="J. Bacteriol.">
        <title>Chromosome rearrangement and diversification of Francisella tularensis revealed by the type B (OSU18) genome sequence.</title>
        <authorList>
            <person name="Petrosino J.F."/>
            <person name="Xiang Q."/>
            <person name="Karpathy S.E."/>
            <person name="Jiang H."/>
            <person name="Yerrapragada S."/>
            <person name="Liu Y."/>
            <person name="Gioia J."/>
            <person name="Hemphill L."/>
            <person name="Gonzalez A."/>
            <person name="Raghavan T.M."/>
            <person name="Uzman A."/>
            <person name="Fox G.E."/>
            <person name="Highlander S."/>
            <person name="Reichard M."/>
            <person name="Morton R.J."/>
            <person name="Clinkenbeard K.D."/>
            <person name="Weinstock G.M."/>
        </authorList>
    </citation>
    <scope>NUCLEOTIDE SEQUENCE [LARGE SCALE GENOMIC DNA]</scope>
    <source>
        <strain>OSU18</strain>
    </source>
</reference>
<accession>Q0BKF2</accession>
<organism>
    <name type="scientific">Francisella tularensis subsp. holarctica (strain OSU18)</name>
    <dbReference type="NCBI Taxonomy" id="393011"/>
    <lineage>
        <taxon>Bacteria</taxon>
        <taxon>Pseudomonadati</taxon>
        <taxon>Pseudomonadota</taxon>
        <taxon>Gammaproteobacteria</taxon>
        <taxon>Thiotrichales</taxon>
        <taxon>Francisellaceae</taxon>
        <taxon>Francisella</taxon>
    </lineage>
</organism>
<dbReference type="EMBL" id="CP000437">
    <property type="protein sequence ID" value="ABI83432.1"/>
    <property type="status" value="ALT_INIT"/>
    <property type="molecule type" value="Genomic_DNA"/>
</dbReference>
<dbReference type="SMR" id="Q0BKF2"/>
<dbReference type="KEGG" id="fth:FTH_1656"/>
<dbReference type="GO" id="GO:0005829">
    <property type="term" value="C:cytosol"/>
    <property type="evidence" value="ECO:0007669"/>
    <property type="project" value="TreeGrafter"/>
</dbReference>
<dbReference type="GO" id="GO:0033194">
    <property type="term" value="P:response to hydroperoxide"/>
    <property type="evidence" value="ECO:0007669"/>
    <property type="project" value="TreeGrafter"/>
</dbReference>
<dbReference type="HAMAP" id="MF_00652">
    <property type="entry name" value="UPF0246"/>
    <property type="match status" value="1"/>
</dbReference>
<dbReference type="InterPro" id="IPR005583">
    <property type="entry name" value="YaaA"/>
</dbReference>
<dbReference type="NCBIfam" id="NF002542">
    <property type="entry name" value="PRK02101.1-3"/>
    <property type="match status" value="1"/>
</dbReference>
<dbReference type="PANTHER" id="PTHR30283:SF4">
    <property type="entry name" value="PEROXIDE STRESS RESISTANCE PROTEIN YAAA"/>
    <property type="match status" value="1"/>
</dbReference>
<dbReference type="PANTHER" id="PTHR30283">
    <property type="entry name" value="PEROXIDE STRESS RESPONSE PROTEIN YAAA"/>
    <property type="match status" value="1"/>
</dbReference>
<dbReference type="Pfam" id="PF03883">
    <property type="entry name" value="H2O2_YaaD"/>
    <property type="match status" value="1"/>
</dbReference>
<name>Y1656_FRATO</name>